<protein>
    <recommendedName>
        <fullName>Probable pectinesterase/pectinesterase inhibitor 20</fullName>
    </recommendedName>
    <domain>
        <recommendedName>
            <fullName>Pectinesterase inhibitor 20</fullName>
        </recommendedName>
        <alternativeName>
            <fullName>Pectin methylesterase inhibitor 20</fullName>
        </alternativeName>
    </domain>
    <domain>
        <recommendedName>
            <fullName>Pectinesterase 20</fullName>
            <shortName>PE 20</shortName>
            <ecNumber>3.1.1.11</ecNumber>
        </recommendedName>
        <alternativeName>
            <fullName>Pectin methylesterase 20</fullName>
            <shortName>AtPME20</shortName>
        </alternativeName>
    </domain>
</protein>
<keyword id="KW-0063">Aspartyl esterase</keyword>
<keyword id="KW-0134">Cell wall</keyword>
<keyword id="KW-0961">Cell wall biogenesis/degradation</keyword>
<keyword id="KW-1015">Disulfide bond</keyword>
<keyword id="KW-0325">Glycoprotein</keyword>
<keyword id="KW-0378">Hydrolase</keyword>
<keyword id="KW-1185">Reference proteome</keyword>
<keyword id="KW-0964">Secreted</keyword>
<keyword id="KW-0732">Signal</keyword>
<sequence>MSQKLMFLFTLACLSSLPSPFISAQIPAIGNATSPSNICRFAPDPSYCRSVLPNQPGDIYSYGRLSLRRSLSRARRFISMIDAELDRKGKVAAKSTVGALEDCKFLASLTMDYLLSSSQTADSTKTLSLSRAEDVHTFLSAAITNEQTCLEGLKSTASENGLSGDLFNDTKLYGVSLALFSKGWVPRRQRSRPIWQPQARFKKFFGFRNGKLPLKMTERARAVYNTVTRRKLLQSDADAVQVSDIVTVIQNGTGNFTTINAAIAAAPNKTDGSNGYFLIYVTAGLYEEYVEVPKNKRYVMMIGDGINQTVITGNRSVVDGWTTFNSATFILSGPNFIGVNITIRNTAGPTKGQAVALRSGGDLSVFYSCSFEAYQDTLYTHSLRQFYRECDVYGTVDFIFGNAAVVLQNCNLYPRQPRKGQSNEVTAQGRTDPNQNTGTAIHGCTIRPADDLATSNYTVKTYLGRPWKEYSRTVVMQTYIDGFLEPSGWNAWSGDFALSTLYYAEYNNTGPGSDTTNRVTWPGYHVINATDASNFTVTNFLVGEGWIGQTGVPFVGGLIA</sequence>
<reference key="1">
    <citation type="journal article" date="1999" name="Nature">
        <title>Sequence and analysis of chromosome 2 of the plant Arabidopsis thaliana.</title>
        <authorList>
            <person name="Lin X."/>
            <person name="Kaul S."/>
            <person name="Rounsley S.D."/>
            <person name="Shea T.P."/>
            <person name="Benito M.-I."/>
            <person name="Town C.D."/>
            <person name="Fujii C.Y."/>
            <person name="Mason T.M."/>
            <person name="Bowman C.L."/>
            <person name="Barnstead M.E."/>
            <person name="Feldblyum T.V."/>
            <person name="Buell C.R."/>
            <person name="Ketchum K.A."/>
            <person name="Lee J.J."/>
            <person name="Ronning C.M."/>
            <person name="Koo H.L."/>
            <person name="Moffat K.S."/>
            <person name="Cronin L.A."/>
            <person name="Shen M."/>
            <person name="Pai G."/>
            <person name="Van Aken S."/>
            <person name="Umayam L."/>
            <person name="Tallon L.J."/>
            <person name="Gill J.E."/>
            <person name="Adams M.D."/>
            <person name="Carrera A.J."/>
            <person name="Creasy T.H."/>
            <person name="Goodman H.M."/>
            <person name="Somerville C.R."/>
            <person name="Copenhaver G.P."/>
            <person name="Preuss D."/>
            <person name="Nierman W.C."/>
            <person name="White O."/>
            <person name="Eisen J.A."/>
            <person name="Salzberg S.L."/>
            <person name="Fraser C.M."/>
            <person name="Venter J.C."/>
        </authorList>
    </citation>
    <scope>NUCLEOTIDE SEQUENCE [LARGE SCALE GENOMIC DNA]</scope>
    <source>
        <strain>cv. Columbia</strain>
    </source>
</reference>
<reference key="2">
    <citation type="journal article" date="2017" name="Plant J.">
        <title>Araport11: a complete reannotation of the Arabidopsis thaliana reference genome.</title>
        <authorList>
            <person name="Cheng C.Y."/>
            <person name="Krishnakumar V."/>
            <person name="Chan A.P."/>
            <person name="Thibaud-Nissen F."/>
            <person name="Schobel S."/>
            <person name="Town C.D."/>
        </authorList>
    </citation>
    <scope>GENOME REANNOTATION</scope>
    <source>
        <strain>cv. Columbia</strain>
    </source>
</reference>
<reference key="3">
    <citation type="journal article" date="2003" name="Science">
        <title>Empirical analysis of transcriptional activity in the Arabidopsis genome.</title>
        <authorList>
            <person name="Yamada K."/>
            <person name="Lim J."/>
            <person name="Dale J.M."/>
            <person name="Chen H."/>
            <person name="Shinn P."/>
            <person name="Palm C.J."/>
            <person name="Southwick A.M."/>
            <person name="Wu H.C."/>
            <person name="Kim C.J."/>
            <person name="Nguyen M."/>
            <person name="Pham P.K."/>
            <person name="Cheuk R.F."/>
            <person name="Karlin-Newmann G."/>
            <person name="Liu S.X."/>
            <person name="Lam B."/>
            <person name="Sakano H."/>
            <person name="Wu T."/>
            <person name="Yu G."/>
            <person name="Miranda M."/>
            <person name="Quach H.L."/>
            <person name="Tripp M."/>
            <person name="Chang C.H."/>
            <person name="Lee J.M."/>
            <person name="Toriumi M.J."/>
            <person name="Chan M.M."/>
            <person name="Tang C.C."/>
            <person name="Onodera C.S."/>
            <person name="Deng J.M."/>
            <person name="Akiyama K."/>
            <person name="Ansari Y."/>
            <person name="Arakawa T."/>
            <person name="Banh J."/>
            <person name="Banno F."/>
            <person name="Bowser L."/>
            <person name="Brooks S.Y."/>
            <person name="Carninci P."/>
            <person name="Chao Q."/>
            <person name="Choy N."/>
            <person name="Enju A."/>
            <person name="Goldsmith A.D."/>
            <person name="Gurjal M."/>
            <person name="Hansen N.F."/>
            <person name="Hayashizaki Y."/>
            <person name="Johnson-Hopson C."/>
            <person name="Hsuan V.W."/>
            <person name="Iida K."/>
            <person name="Karnes M."/>
            <person name="Khan S."/>
            <person name="Koesema E."/>
            <person name="Ishida J."/>
            <person name="Jiang P.X."/>
            <person name="Jones T."/>
            <person name="Kawai J."/>
            <person name="Kamiya A."/>
            <person name="Meyers C."/>
            <person name="Nakajima M."/>
            <person name="Narusaka M."/>
            <person name="Seki M."/>
            <person name="Sakurai T."/>
            <person name="Satou M."/>
            <person name="Tamse R."/>
            <person name="Vaysberg M."/>
            <person name="Wallender E.K."/>
            <person name="Wong C."/>
            <person name="Yamamura Y."/>
            <person name="Yuan S."/>
            <person name="Shinozaki K."/>
            <person name="Davis R.W."/>
            <person name="Theologis A."/>
            <person name="Ecker J.R."/>
        </authorList>
    </citation>
    <scope>NUCLEOTIDE SEQUENCE [LARGE SCALE MRNA]</scope>
    <source>
        <strain>cv. Columbia</strain>
    </source>
</reference>
<reference key="4">
    <citation type="journal article" date="2004" name="Carbohydr. Res.">
        <title>Pectin methylesterases: sequence-structural features and phylogenetic relationships.</title>
        <authorList>
            <person name="Markovic O."/>
            <person name="Janecek S."/>
        </authorList>
    </citation>
    <scope>GENE FAMILY</scope>
    <scope>NOMENCLATURE</scope>
</reference>
<reference key="5">
    <citation type="journal article" date="2006" name="Planta">
        <title>Comprehensive expression profiling of the pectin methylesterase gene family during silique development in Arabidopsis thaliana.</title>
        <authorList>
            <person name="Louvet R."/>
            <person name="Cavel E."/>
            <person name="Gutierrez L."/>
            <person name="Guenin S."/>
            <person name="Roger D."/>
            <person name="Gillet F."/>
            <person name="Guerineau F."/>
            <person name="Pelloux J."/>
        </authorList>
    </citation>
    <scope>TISSUE SPECIFICITY</scope>
    <scope>DEVELOPMENTAL STAGE</scope>
</reference>
<dbReference type="EC" id="3.1.1.11"/>
<dbReference type="EMBL" id="AC002535">
    <property type="protein sequence ID" value="AAC62855.2"/>
    <property type="molecule type" value="Genomic_DNA"/>
</dbReference>
<dbReference type="EMBL" id="CP002685">
    <property type="protein sequence ID" value="AEC10857.1"/>
    <property type="molecule type" value="Genomic_DNA"/>
</dbReference>
<dbReference type="EMBL" id="AY058099">
    <property type="protein sequence ID" value="AAL24207.1"/>
    <property type="status" value="ALT_FRAME"/>
    <property type="molecule type" value="mRNA"/>
</dbReference>
<dbReference type="EMBL" id="BT002700">
    <property type="protein sequence ID" value="AAO11616.1"/>
    <property type="molecule type" value="mRNA"/>
</dbReference>
<dbReference type="PIR" id="T00429">
    <property type="entry name" value="T00429"/>
</dbReference>
<dbReference type="RefSeq" id="NP_566103.1">
    <property type="nucleotide sequence ID" value="NM_130323.4"/>
</dbReference>
<dbReference type="SMR" id="O22256"/>
<dbReference type="FunCoup" id="O22256">
    <property type="interactions" value="132"/>
</dbReference>
<dbReference type="STRING" id="3702.O22256"/>
<dbReference type="GlyCosmos" id="O22256">
    <property type="glycosylation" value="12 sites, No reported glycans"/>
</dbReference>
<dbReference type="GlyGen" id="O22256">
    <property type="glycosylation" value="13 sites"/>
</dbReference>
<dbReference type="PaxDb" id="3702-AT2G47550.1"/>
<dbReference type="ProteomicsDB" id="234877"/>
<dbReference type="EnsemblPlants" id="AT2G47550.1">
    <property type="protein sequence ID" value="AT2G47550.1"/>
    <property type="gene ID" value="AT2G47550"/>
</dbReference>
<dbReference type="GeneID" id="819368"/>
<dbReference type="Gramene" id="AT2G47550.1">
    <property type="protein sequence ID" value="AT2G47550.1"/>
    <property type="gene ID" value="AT2G47550"/>
</dbReference>
<dbReference type="KEGG" id="ath:AT2G47550"/>
<dbReference type="Araport" id="AT2G47550"/>
<dbReference type="TAIR" id="AT2G47550"/>
<dbReference type="eggNOG" id="ENOG502QUB9">
    <property type="taxonomic scope" value="Eukaryota"/>
</dbReference>
<dbReference type="HOGENOM" id="CLU_012243_9_1_1"/>
<dbReference type="InParanoid" id="O22256"/>
<dbReference type="OMA" id="AIHGCTI"/>
<dbReference type="OrthoDB" id="2019149at2759"/>
<dbReference type="PhylomeDB" id="O22256"/>
<dbReference type="BioCyc" id="ARA:AT2G47550-MONOMER"/>
<dbReference type="UniPathway" id="UPA00545">
    <property type="reaction ID" value="UER00823"/>
</dbReference>
<dbReference type="PRO" id="PR:O22256"/>
<dbReference type="Proteomes" id="UP000006548">
    <property type="component" value="Chromosome 2"/>
</dbReference>
<dbReference type="ExpressionAtlas" id="O22256">
    <property type="expression patterns" value="baseline and differential"/>
</dbReference>
<dbReference type="GO" id="GO:0005576">
    <property type="term" value="C:extracellular region"/>
    <property type="evidence" value="ECO:0007669"/>
    <property type="project" value="UniProtKB-KW"/>
</dbReference>
<dbReference type="GO" id="GO:0004857">
    <property type="term" value="F:enzyme inhibitor activity"/>
    <property type="evidence" value="ECO:0007669"/>
    <property type="project" value="InterPro"/>
</dbReference>
<dbReference type="GO" id="GO:0030599">
    <property type="term" value="F:pectinesterase activity"/>
    <property type="evidence" value="ECO:0007669"/>
    <property type="project" value="UniProtKB-EC"/>
</dbReference>
<dbReference type="GO" id="GO:0042545">
    <property type="term" value="P:cell wall modification"/>
    <property type="evidence" value="ECO:0007669"/>
    <property type="project" value="InterPro"/>
</dbReference>
<dbReference type="GO" id="GO:0045490">
    <property type="term" value="P:pectin catabolic process"/>
    <property type="evidence" value="ECO:0007669"/>
    <property type="project" value="UniProtKB-UniPathway"/>
</dbReference>
<dbReference type="CDD" id="cd15798">
    <property type="entry name" value="PMEI-like_3"/>
    <property type="match status" value="1"/>
</dbReference>
<dbReference type="FunFam" id="1.20.140.40:FF:000004">
    <property type="entry name" value="Pectinesterase"/>
    <property type="match status" value="1"/>
</dbReference>
<dbReference type="FunFam" id="2.160.20.10:FF:000001">
    <property type="entry name" value="Pectinesterase"/>
    <property type="match status" value="1"/>
</dbReference>
<dbReference type="Gene3D" id="1.20.140.40">
    <property type="entry name" value="Invertase/pectin methylesterase inhibitor family protein"/>
    <property type="match status" value="1"/>
</dbReference>
<dbReference type="Gene3D" id="2.160.20.10">
    <property type="entry name" value="Single-stranded right-handed beta-helix, Pectin lyase-like"/>
    <property type="match status" value="1"/>
</dbReference>
<dbReference type="InterPro" id="IPR035513">
    <property type="entry name" value="Invertase/methylesterase_inhib"/>
</dbReference>
<dbReference type="InterPro" id="IPR012334">
    <property type="entry name" value="Pectin_lyas_fold"/>
</dbReference>
<dbReference type="InterPro" id="IPR011050">
    <property type="entry name" value="Pectin_lyase_fold/virulence"/>
</dbReference>
<dbReference type="InterPro" id="IPR033131">
    <property type="entry name" value="Pectinesterase_Asp_AS"/>
</dbReference>
<dbReference type="InterPro" id="IPR000070">
    <property type="entry name" value="Pectinesterase_cat"/>
</dbReference>
<dbReference type="InterPro" id="IPR006501">
    <property type="entry name" value="Pectinesterase_inhib_dom"/>
</dbReference>
<dbReference type="PANTHER" id="PTHR31707">
    <property type="entry name" value="PECTINESTERASE"/>
    <property type="match status" value="1"/>
</dbReference>
<dbReference type="Pfam" id="PF01095">
    <property type="entry name" value="Pectinesterase"/>
    <property type="match status" value="1"/>
</dbReference>
<dbReference type="Pfam" id="PF04043">
    <property type="entry name" value="PMEI"/>
    <property type="match status" value="1"/>
</dbReference>
<dbReference type="SMART" id="SM00856">
    <property type="entry name" value="PMEI"/>
    <property type="match status" value="1"/>
</dbReference>
<dbReference type="SUPFAM" id="SSF51126">
    <property type="entry name" value="Pectin lyase-like"/>
    <property type="match status" value="1"/>
</dbReference>
<dbReference type="SUPFAM" id="SSF101148">
    <property type="entry name" value="Plant invertase/pectin methylesterase inhibitor"/>
    <property type="match status" value="1"/>
</dbReference>
<dbReference type="PROSITE" id="PS00503">
    <property type="entry name" value="PECTINESTERASE_2"/>
    <property type="match status" value="1"/>
</dbReference>
<organism>
    <name type="scientific">Arabidopsis thaliana</name>
    <name type="common">Mouse-ear cress</name>
    <dbReference type="NCBI Taxonomy" id="3702"/>
    <lineage>
        <taxon>Eukaryota</taxon>
        <taxon>Viridiplantae</taxon>
        <taxon>Streptophyta</taxon>
        <taxon>Embryophyta</taxon>
        <taxon>Tracheophyta</taxon>
        <taxon>Spermatophyta</taxon>
        <taxon>Magnoliopsida</taxon>
        <taxon>eudicotyledons</taxon>
        <taxon>Gunneridae</taxon>
        <taxon>Pentapetalae</taxon>
        <taxon>rosids</taxon>
        <taxon>malvids</taxon>
        <taxon>Brassicales</taxon>
        <taxon>Brassicaceae</taxon>
        <taxon>Camelineae</taxon>
        <taxon>Arabidopsis</taxon>
    </lineage>
</organism>
<gene>
    <name type="primary">PME20</name>
    <name type="synonym">ARATH20</name>
    <name type="ordered locus">At2g47550</name>
    <name type="ORF">T30B22.15</name>
</gene>
<accession>O22256</accession>
<accession>Q8GUF8</accession>
<accession>Q93Z62</accession>
<proteinExistence type="evidence at transcript level"/>
<comment type="function">
    <text evidence="1">Acts in the modification of cell walls via demethylesterification of cell wall pectin.</text>
</comment>
<comment type="catalytic activity">
    <reaction>
        <text>[(1-&gt;4)-alpha-D-galacturonosyl methyl ester](n) + n H2O = [(1-&gt;4)-alpha-D-galacturonosyl](n) + n methanol + n H(+)</text>
        <dbReference type="Rhea" id="RHEA:22380"/>
        <dbReference type="Rhea" id="RHEA-COMP:14570"/>
        <dbReference type="Rhea" id="RHEA-COMP:14573"/>
        <dbReference type="ChEBI" id="CHEBI:15377"/>
        <dbReference type="ChEBI" id="CHEBI:15378"/>
        <dbReference type="ChEBI" id="CHEBI:17790"/>
        <dbReference type="ChEBI" id="CHEBI:140522"/>
        <dbReference type="ChEBI" id="CHEBI:140523"/>
        <dbReference type="EC" id="3.1.1.11"/>
    </reaction>
</comment>
<comment type="pathway">
    <text>Glycan metabolism; pectin degradation; 2-dehydro-3-deoxy-D-gluconate from pectin: step 1/5.</text>
</comment>
<comment type="subcellular location">
    <subcellularLocation>
        <location evidence="1">Secreted</location>
        <location evidence="1">Cell wall</location>
    </subcellularLocation>
</comment>
<comment type="tissue specificity">
    <text evidence="5">Expressed in flower buds.</text>
</comment>
<comment type="miscellaneous">
    <text>The PMEI region may act as an autoinhibitory domain and prevent untimely PME activity during transport.</text>
</comment>
<comment type="similarity">
    <text evidence="6">In the N-terminal section; belongs to the PMEI family.</text>
</comment>
<comment type="similarity">
    <text evidence="6">In the C-terminal section; belongs to the pectinesterase family.</text>
</comment>
<comment type="sequence caution" evidence="6">
    <conflict type="frameshift">
        <sequence resource="EMBL-CDS" id="AAL24207"/>
    </conflict>
</comment>
<feature type="signal peptide" evidence="2">
    <location>
        <begin position="1"/>
        <end position="24"/>
    </location>
</feature>
<feature type="chain" id="PRO_0000371676" description="Probable pectinesterase/pectinesterase inhibitor 20">
    <location>
        <begin position="25"/>
        <end position="560"/>
    </location>
</feature>
<feature type="region of interest" description="Pectinesterase inhibitor 20">
    <location>
        <begin position="25"/>
        <end position="179"/>
    </location>
</feature>
<feature type="region of interest" description="Pectinesterase 20">
    <location>
        <begin position="246"/>
        <end position="544"/>
    </location>
</feature>
<feature type="region of interest" description="Disordered" evidence="4">
    <location>
        <begin position="417"/>
        <end position="441"/>
    </location>
</feature>
<feature type="compositionally biased region" description="Polar residues" evidence="4">
    <location>
        <begin position="419"/>
        <end position="439"/>
    </location>
</feature>
<feature type="active site" description="Proton donor; for pectinesterase activity" evidence="3">
    <location>
        <position position="376"/>
    </location>
</feature>
<feature type="active site" description="Nucleophile; for pectinesterase activity" evidence="3">
    <location>
        <position position="397"/>
    </location>
</feature>
<feature type="binding site" evidence="1">
    <location>
        <position position="323"/>
    </location>
    <ligand>
        <name>substrate</name>
        <note>for pectinesterase activity</note>
    </ligand>
</feature>
<feature type="binding site" evidence="1">
    <location>
        <position position="353"/>
    </location>
    <ligand>
        <name>substrate</name>
        <note>for pectinesterase activity</note>
    </ligand>
</feature>
<feature type="binding site" evidence="1">
    <location>
        <position position="465"/>
    </location>
    <ligand>
        <name>substrate</name>
        <note>for pectinesterase activity</note>
    </ligand>
</feature>
<feature type="binding site" evidence="1">
    <location>
        <position position="467"/>
    </location>
    <ligand>
        <name>substrate</name>
        <note>for pectinesterase activity</note>
    </ligand>
</feature>
<feature type="site" description="Transition state stabilizer" evidence="1">
    <location>
        <position position="375"/>
    </location>
</feature>
<feature type="glycosylation site" description="N-linked (GlcNAc...) asparagine" evidence="2">
    <location>
        <position position="31"/>
    </location>
</feature>
<feature type="glycosylation site" description="N-linked (GlcNAc...) asparagine" evidence="2">
    <location>
        <position position="168"/>
    </location>
</feature>
<feature type="glycosylation site" description="N-linked (GlcNAc...) asparagine" evidence="2">
    <location>
        <position position="251"/>
    </location>
</feature>
<feature type="glycosylation site" description="N-linked (GlcNAc...) asparagine" evidence="2">
    <location>
        <position position="255"/>
    </location>
</feature>
<feature type="glycosylation site" description="N-linked (GlcNAc...) asparagine" evidence="2">
    <location>
        <position position="268"/>
    </location>
</feature>
<feature type="glycosylation site" description="N-linked (GlcNAc...) asparagine" evidence="2">
    <location>
        <position position="307"/>
    </location>
</feature>
<feature type="glycosylation site" description="N-linked (GlcNAc...) asparagine" evidence="2">
    <location>
        <position position="314"/>
    </location>
</feature>
<feature type="glycosylation site" description="N-linked (GlcNAc...) asparagine" evidence="2">
    <location>
        <position position="340"/>
    </location>
</feature>
<feature type="glycosylation site" description="N-linked (GlcNAc...) asparagine" evidence="2">
    <location>
        <position position="456"/>
    </location>
</feature>
<feature type="glycosylation site" description="N-linked (GlcNAc...) asparagine" evidence="2">
    <location>
        <position position="507"/>
    </location>
</feature>
<feature type="glycosylation site" description="N-linked (GlcNAc...) asparagine" evidence="2">
    <location>
        <position position="528"/>
    </location>
</feature>
<feature type="glycosylation site" description="N-linked (GlcNAc...) asparagine" evidence="2">
    <location>
        <position position="534"/>
    </location>
</feature>
<feature type="disulfide bond" evidence="1">
    <location>
        <begin position="390"/>
        <end position="410"/>
    </location>
</feature>
<name>PME20_ARATH</name>
<evidence type="ECO:0000250" key="1"/>
<evidence type="ECO:0000255" key="2"/>
<evidence type="ECO:0000255" key="3">
    <source>
        <dbReference type="PROSITE-ProRule" id="PRU10040"/>
    </source>
</evidence>
<evidence type="ECO:0000256" key="4">
    <source>
        <dbReference type="SAM" id="MobiDB-lite"/>
    </source>
</evidence>
<evidence type="ECO:0000269" key="5">
    <source>
    </source>
</evidence>
<evidence type="ECO:0000305" key="6"/>